<gene>
    <name type="primary">BUD17</name>
    <name type="ordered locus">YNR027W</name>
    <name type="ORF">N3250</name>
</gene>
<protein>
    <recommendedName>
        <fullName>Putative pyridoxal kinase BUD17</fullName>
        <ecNumber>2.7.1.35</ecNumber>
    </recommendedName>
    <alternativeName>
        <fullName>Bud site selection protein 17</fullName>
    </alternativeName>
</protein>
<feature type="chain" id="PRO_0000213349" description="Putative pyridoxal kinase BUD17">
    <location>
        <begin position="1"/>
        <end position="317"/>
    </location>
</feature>
<feature type="binding site" evidence="1">
    <location>
        <position position="16"/>
    </location>
    <ligand>
        <name>substrate</name>
    </ligand>
</feature>
<feature type="binding site" evidence="1">
    <location>
        <position position="128"/>
    </location>
    <ligand>
        <name>substrate</name>
    </ligand>
</feature>
<feature type="binding site" evidence="1">
    <location>
        <begin position="190"/>
        <end position="191"/>
    </location>
    <ligand>
        <name>ATP</name>
        <dbReference type="ChEBI" id="CHEBI:30616"/>
    </ligand>
</feature>
<feature type="binding site" evidence="1">
    <location>
        <begin position="220"/>
        <end position="232"/>
    </location>
    <ligand>
        <name>ATP</name>
        <dbReference type="ChEBI" id="CHEBI:30616"/>
    </ligand>
</feature>
<feature type="binding site" evidence="1">
    <location>
        <position position="233"/>
    </location>
    <ligand>
        <name>substrate</name>
    </ligand>
</feature>
<feature type="sequence conflict" description="In Ref. 3; AAT92965." evidence="5" ref="3">
    <original>V</original>
    <variation>G</variation>
    <location>
        <position position="93"/>
    </location>
</feature>
<proteinExistence type="evidence at protein level"/>
<dbReference type="EC" id="2.7.1.35"/>
<dbReference type="EMBL" id="Z71642">
    <property type="protein sequence ID" value="CAA96307.1"/>
    <property type="molecule type" value="Genomic_DNA"/>
</dbReference>
<dbReference type="EMBL" id="AY692946">
    <property type="protein sequence ID" value="AAT92965.1"/>
    <property type="molecule type" value="Genomic_DNA"/>
</dbReference>
<dbReference type="EMBL" id="BK006947">
    <property type="protein sequence ID" value="DAA10567.1"/>
    <property type="molecule type" value="Genomic_DNA"/>
</dbReference>
<dbReference type="PIR" id="S63358">
    <property type="entry name" value="S63358"/>
</dbReference>
<dbReference type="RefSeq" id="NP_014424.1">
    <property type="nucleotide sequence ID" value="NM_001183204.1"/>
</dbReference>
<dbReference type="SMR" id="P53727"/>
<dbReference type="BioGRID" id="35851">
    <property type="interactions" value="37"/>
</dbReference>
<dbReference type="DIP" id="DIP-2629N"/>
<dbReference type="FunCoup" id="P53727">
    <property type="interactions" value="279"/>
</dbReference>
<dbReference type="IntAct" id="P53727">
    <property type="interactions" value="9"/>
</dbReference>
<dbReference type="MINT" id="P53727"/>
<dbReference type="STRING" id="4932.YNR027W"/>
<dbReference type="iPTMnet" id="P53727"/>
<dbReference type="PaxDb" id="4932-YNR027W"/>
<dbReference type="PeptideAtlas" id="P53727"/>
<dbReference type="EnsemblFungi" id="YNR027W_mRNA">
    <property type="protein sequence ID" value="YNR027W"/>
    <property type="gene ID" value="YNR027W"/>
</dbReference>
<dbReference type="GeneID" id="855761"/>
<dbReference type="KEGG" id="sce:YNR027W"/>
<dbReference type="AGR" id="SGD:S000005310"/>
<dbReference type="SGD" id="S000005310">
    <property type="gene designation" value="BUD17"/>
</dbReference>
<dbReference type="VEuPathDB" id="FungiDB:YNR027W"/>
<dbReference type="eggNOG" id="KOG2599">
    <property type="taxonomic scope" value="Eukaryota"/>
</dbReference>
<dbReference type="GeneTree" id="ENSGT00390000003874"/>
<dbReference type="HOGENOM" id="CLU_046496_1_0_1"/>
<dbReference type="InParanoid" id="P53727"/>
<dbReference type="OMA" id="FEMETLT"/>
<dbReference type="OrthoDB" id="2104723at2759"/>
<dbReference type="BioCyc" id="YEAST:G3O-33340-MONOMER"/>
<dbReference type="BioGRID-ORCS" id="855761">
    <property type="hits" value="0 hits in 10 CRISPR screens"/>
</dbReference>
<dbReference type="PRO" id="PR:P53727"/>
<dbReference type="Proteomes" id="UP000002311">
    <property type="component" value="Chromosome XIV"/>
</dbReference>
<dbReference type="RNAct" id="P53727">
    <property type="molecule type" value="protein"/>
</dbReference>
<dbReference type="GO" id="GO:0005737">
    <property type="term" value="C:cytoplasm"/>
    <property type="evidence" value="ECO:0007005"/>
    <property type="project" value="SGD"/>
</dbReference>
<dbReference type="GO" id="GO:0005829">
    <property type="term" value="C:cytosol"/>
    <property type="evidence" value="ECO:0000318"/>
    <property type="project" value="GO_Central"/>
</dbReference>
<dbReference type="GO" id="GO:0005634">
    <property type="term" value="C:nucleus"/>
    <property type="evidence" value="ECO:0007005"/>
    <property type="project" value="SGD"/>
</dbReference>
<dbReference type="GO" id="GO:0005524">
    <property type="term" value="F:ATP binding"/>
    <property type="evidence" value="ECO:0007669"/>
    <property type="project" value="UniProtKB-KW"/>
</dbReference>
<dbReference type="GO" id="GO:0046872">
    <property type="term" value="F:metal ion binding"/>
    <property type="evidence" value="ECO:0007669"/>
    <property type="project" value="UniProtKB-KW"/>
</dbReference>
<dbReference type="GO" id="GO:0008478">
    <property type="term" value="F:pyridoxal kinase activity"/>
    <property type="evidence" value="ECO:0000247"/>
    <property type="project" value="SGD"/>
</dbReference>
<dbReference type="GO" id="GO:0009443">
    <property type="term" value="P:pyridoxal 5'-phosphate salvage"/>
    <property type="evidence" value="ECO:0000318"/>
    <property type="project" value="GO_Central"/>
</dbReference>
<dbReference type="GO" id="GO:0042823">
    <property type="term" value="P:pyridoxal phosphate biosynthetic process"/>
    <property type="evidence" value="ECO:0000305"/>
    <property type="project" value="SGD"/>
</dbReference>
<dbReference type="CDD" id="cd01173">
    <property type="entry name" value="pyridoxal_pyridoxamine_kinase"/>
    <property type="match status" value="1"/>
</dbReference>
<dbReference type="FunFam" id="3.40.1190.20:FF:000079">
    <property type="entry name" value="BUD17p putative pyridoxal kinase"/>
    <property type="match status" value="1"/>
</dbReference>
<dbReference type="Gene3D" id="3.40.1190.20">
    <property type="match status" value="1"/>
</dbReference>
<dbReference type="InterPro" id="IPR013749">
    <property type="entry name" value="PM/HMP-P_kinase-1"/>
</dbReference>
<dbReference type="InterPro" id="IPR004625">
    <property type="entry name" value="PyrdxlKinase"/>
</dbReference>
<dbReference type="InterPro" id="IPR029056">
    <property type="entry name" value="Ribokinase-like"/>
</dbReference>
<dbReference type="NCBIfam" id="TIGR00687">
    <property type="entry name" value="pyridox_kin"/>
    <property type="match status" value="1"/>
</dbReference>
<dbReference type="PANTHER" id="PTHR10534">
    <property type="entry name" value="PYRIDOXAL KINASE"/>
    <property type="match status" value="1"/>
</dbReference>
<dbReference type="PANTHER" id="PTHR10534:SF12">
    <property type="entry name" value="PYRIDOXAL KINASE BUD17-RELATED"/>
    <property type="match status" value="1"/>
</dbReference>
<dbReference type="Pfam" id="PF08543">
    <property type="entry name" value="Phos_pyr_kin"/>
    <property type="match status" value="1"/>
</dbReference>
<dbReference type="SUPFAM" id="SSF53613">
    <property type="entry name" value="Ribokinase-like"/>
    <property type="match status" value="1"/>
</dbReference>
<evidence type="ECO:0000250" key="1"/>
<evidence type="ECO:0000269" key="2">
    <source>
    </source>
</evidence>
<evidence type="ECO:0000269" key="3">
    <source>
    </source>
</evidence>
<evidence type="ECO:0000269" key="4">
    <source>
    </source>
</evidence>
<evidence type="ECO:0000305" key="5"/>
<name>BUD17_YEAST</name>
<organism>
    <name type="scientific">Saccharomyces cerevisiae (strain ATCC 204508 / S288c)</name>
    <name type="common">Baker's yeast</name>
    <dbReference type="NCBI Taxonomy" id="559292"/>
    <lineage>
        <taxon>Eukaryota</taxon>
        <taxon>Fungi</taxon>
        <taxon>Dikarya</taxon>
        <taxon>Ascomycota</taxon>
        <taxon>Saccharomycotina</taxon>
        <taxon>Saccharomycetes</taxon>
        <taxon>Saccharomycetales</taxon>
        <taxon>Saccharomycetaceae</taxon>
        <taxon>Saccharomyces</taxon>
    </lineage>
</organism>
<comment type="function">
    <text evidence="1 2">Required for synthesis of pyridoxal-5-phosphate from vitamin B6 (By similarity). Important for bud site selection.</text>
</comment>
<comment type="catalytic activity">
    <reaction>
        <text>pyridoxal + ATP = pyridoxal 5'-phosphate + ADP + H(+)</text>
        <dbReference type="Rhea" id="RHEA:10224"/>
        <dbReference type="ChEBI" id="CHEBI:15378"/>
        <dbReference type="ChEBI" id="CHEBI:17310"/>
        <dbReference type="ChEBI" id="CHEBI:30616"/>
        <dbReference type="ChEBI" id="CHEBI:456216"/>
        <dbReference type="ChEBI" id="CHEBI:597326"/>
        <dbReference type="EC" id="2.7.1.35"/>
    </reaction>
</comment>
<comment type="cofactor">
    <cofactor evidence="1">
        <name>a divalent metal cation</name>
        <dbReference type="ChEBI" id="CHEBI:60240"/>
    </cofactor>
</comment>
<comment type="subcellular location">
    <subcellularLocation>
        <location evidence="3">Cytoplasm</location>
    </subcellularLocation>
    <subcellularLocation>
        <location evidence="3">Nucleus</location>
    </subcellularLocation>
</comment>
<comment type="miscellaneous">
    <text evidence="4">Present with 6580 molecules/cell in log phase SD medium.</text>
</comment>
<comment type="similarity">
    <text evidence="5">Belongs to the pyridoxine kinase family.</text>
</comment>
<sequence length="317" mass="35367">MTSTLHTTKKVLSIQSHVIHGYVGNKAATFPLQYRGWDVDVLNTVQFSNHSGYAHFTGFKCSTEELVDIVEKGLIGSLRIKYDAVLSGYLPNVQALQKVAGIVGQLCEGSENVKWILDPVLGDNGRLYVDRECVAVYQDILQNFKIFLATPNQFEMELLVGMSIRTLDDAKQAFKLFHKKYPRVSRIVVTSLELSEFLSNDTYVVAGFDCSASEEIFFYEIPKINAKFSGSGDLISAMLTDSLLGDRRCTQLSLSASLGQVLWLVTSILQKTYDLNIAERGPQDSTIDIKDLKLIQCRDILKQDLIPSIGKPKTIKI</sequence>
<keyword id="KW-0067">ATP-binding</keyword>
<keyword id="KW-0131">Cell cycle</keyword>
<keyword id="KW-0963">Cytoplasm</keyword>
<keyword id="KW-0418">Kinase</keyword>
<keyword id="KW-0479">Metal-binding</keyword>
<keyword id="KW-0547">Nucleotide-binding</keyword>
<keyword id="KW-0539">Nucleus</keyword>
<keyword id="KW-1185">Reference proteome</keyword>
<keyword id="KW-0808">Transferase</keyword>
<keyword id="KW-0862">Zinc</keyword>
<reference key="1">
    <citation type="journal article" date="1997" name="Nature">
        <title>The nucleotide sequence of Saccharomyces cerevisiae chromosome XIV and its evolutionary implications.</title>
        <authorList>
            <person name="Philippsen P."/>
            <person name="Kleine K."/>
            <person name="Poehlmann R."/>
            <person name="Duesterhoeft A."/>
            <person name="Hamberg K."/>
            <person name="Hegemann J.H."/>
            <person name="Obermaier B."/>
            <person name="Urrestarazu L.A."/>
            <person name="Aert R."/>
            <person name="Albermann K."/>
            <person name="Altmann R."/>
            <person name="Andre B."/>
            <person name="Baladron V."/>
            <person name="Ballesta J.P.G."/>
            <person name="Becam A.-M."/>
            <person name="Beinhauer J.D."/>
            <person name="Boskovic J."/>
            <person name="Buitrago M.J."/>
            <person name="Bussereau F."/>
            <person name="Coster F."/>
            <person name="Crouzet M."/>
            <person name="D'Angelo M."/>
            <person name="Dal Pero F."/>
            <person name="De Antoni A."/>
            <person name="del Rey F."/>
            <person name="Doignon F."/>
            <person name="Domdey H."/>
            <person name="Dubois E."/>
            <person name="Fiedler T.A."/>
            <person name="Fleig U."/>
            <person name="Floeth M."/>
            <person name="Fritz C."/>
            <person name="Gaillardin C."/>
            <person name="Garcia-Cantalejo J.M."/>
            <person name="Glansdorff N."/>
            <person name="Goffeau A."/>
            <person name="Gueldener U."/>
            <person name="Herbert C.J."/>
            <person name="Heumann K."/>
            <person name="Heuss-Neitzel D."/>
            <person name="Hilbert H."/>
            <person name="Hinni K."/>
            <person name="Iraqui Houssaini I."/>
            <person name="Jacquet M."/>
            <person name="Jimenez A."/>
            <person name="Jonniaux J.-L."/>
            <person name="Karpfinger-Hartl L."/>
            <person name="Lanfranchi G."/>
            <person name="Lepingle A."/>
            <person name="Levesque H."/>
            <person name="Lyck R."/>
            <person name="Maftahi M."/>
            <person name="Mallet L."/>
            <person name="Maurer C.T.C."/>
            <person name="Messenguy F."/>
            <person name="Mewes H.-W."/>
            <person name="Moestl D."/>
            <person name="Nasr F."/>
            <person name="Nicaud J.-M."/>
            <person name="Niedenthal R.K."/>
            <person name="Pandolfo D."/>
            <person name="Pierard A."/>
            <person name="Piravandi E."/>
            <person name="Planta R.J."/>
            <person name="Pohl T.M."/>
            <person name="Purnelle B."/>
            <person name="Rebischung C."/>
            <person name="Remacha M.A."/>
            <person name="Revuelta J.L."/>
            <person name="Rinke M."/>
            <person name="Saiz J.E."/>
            <person name="Sartorello F."/>
            <person name="Scherens B."/>
            <person name="Sen-Gupta M."/>
            <person name="Soler-Mira A."/>
            <person name="Urbanus J.H.M."/>
            <person name="Valle G."/>
            <person name="Van Dyck L."/>
            <person name="Verhasselt P."/>
            <person name="Vierendeels F."/>
            <person name="Vissers S."/>
            <person name="Voet M."/>
            <person name="Volckaert G."/>
            <person name="Wach A."/>
            <person name="Wambutt R."/>
            <person name="Wedler H."/>
            <person name="Zollner A."/>
            <person name="Hani J."/>
        </authorList>
    </citation>
    <scope>NUCLEOTIDE SEQUENCE [LARGE SCALE GENOMIC DNA]</scope>
    <source>
        <strain>ATCC 204508 / S288c</strain>
    </source>
</reference>
<reference key="2">
    <citation type="journal article" date="2014" name="G3 (Bethesda)">
        <title>The reference genome sequence of Saccharomyces cerevisiae: Then and now.</title>
        <authorList>
            <person name="Engel S.R."/>
            <person name="Dietrich F.S."/>
            <person name="Fisk D.G."/>
            <person name="Binkley G."/>
            <person name="Balakrishnan R."/>
            <person name="Costanzo M.C."/>
            <person name="Dwight S.S."/>
            <person name="Hitz B.C."/>
            <person name="Karra K."/>
            <person name="Nash R.S."/>
            <person name="Weng S."/>
            <person name="Wong E.D."/>
            <person name="Lloyd P."/>
            <person name="Skrzypek M.S."/>
            <person name="Miyasato S.R."/>
            <person name="Simison M."/>
            <person name="Cherry J.M."/>
        </authorList>
    </citation>
    <scope>GENOME REANNOTATION</scope>
    <source>
        <strain>ATCC 204508 / S288c</strain>
    </source>
</reference>
<reference key="3">
    <citation type="journal article" date="2007" name="Genome Res.">
        <title>Approaching a complete repository of sequence-verified protein-encoding clones for Saccharomyces cerevisiae.</title>
        <authorList>
            <person name="Hu Y."/>
            <person name="Rolfs A."/>
            <person name="Bhullar B."/>
            <person name="Murthy T.V.S."/>
            <person name="Zhu C."/>
            <person name="Berger M.F."/>
            <person name="Camargo A.A."/>
            <person name="Kelley F."/>
            <person name="McCarron S."/>
            <person name="Jepson D."/>
            <person name="Richardson A."/>
            <person name="Raphael J."/>
            <person name="Moreira D."/>
            <person name="Taycher E."/>
            <person name="Zuo D."/>
            <person name="Mohr S."/>
            <person name="Kane M.F."/>
            <person name="Williamson J."/>
            <person name="Simpson A.J.G."/>
            <person name="Bulyk M.L."/>
            <person name="Harlow E."/>
            <person name="Marsischky G."/>
            <person name="Kolodner R.D."/>
            <person name="LaBaer J."/>
        </authorList>
    </citation>
    <scope>NUCLEOTIDE SEQUENCE [GENOMIC DNA]</scope>
    <source>
        <strain>ATCC 204508 / S288c</strain>
    </source>
</reference>
<reference key="4">
    <citation type="journal article" date="2001" name="Mol. Biol. Cell">
        <title>A genomic study of the bipolar bud site selection pattern in Saccharomyces cerevisiae.</title>
        <authorList>
            <person name="Ni L."/>
            <person name="Snyder M."/>
        </authorList>
    </citation>
    <scope>FUNCTION</scope>
</reference>
<reference key="5">
    <citation type="journal article" date="2003" name="Nature">
        <title>Global analysis of protein localization in budding yeast.</title>
        <authorList>
            <person name="Huh W.-K."/>
            <person name="Falvo J.V."/>
            <person name="Gerke L.C."/>
            <person name="Carroll A.S."/>
            <person name="Howson R.W."/>
            <person name="Weissman J.S."/>
            <person name="O'Shea E.K."/>
        </authorList>
    </citation>
    <scope>SUBCELLULAR LOCATION [LARGE SCALE ANALYSIS]</scope>
</reference>
<reference key="6">
    <citation type="journal article" date="2003" name="Nature">
        <title>Global analysis of protein expression in yeast.</title>
        <authorList>
            <person name="Ghaemmaghami S."/>
            <person name="Huh W.-K."/>
            <person name="Bower K."/>
            <person name="Howson R.W."/>
            <person name="Belle A."/>
            <person name="Dephoure N."/>
            <person name="O'Shea E.K."/>
            <person name="Weissman J.S."/>
        </authorList>
    </citation>
    <scope>LEVEL OF PROTEIN EXPRESSION [LARGE SCALE ANALYSIS]</scope>
</reference>
<accession>P53727</accession>
<accession>D6W1K1</accession>
<accession>Q6B1Y4</accession>